<comment type="function">
    <text evidence="1">Condenses 4-methyl-5-(beta-hydroxyethyl)thiazole monophosphate (THZ-P) and 2-methyl-4-amino-5-hydroxymethyl pyrimidine pyrophosphate (HMP-PP) to form thiamine monophosphate (TMP).</text>
</comment>
<comment type="catalytic activity">
    <reaction evidence="1">
        <text>2-[(2R,5Z)-2-carboxy-4-methylthiazol-5(2H)-ylidene]ethyl phosphate + 4-amino-2-methyl-5-(diphosphooxymethyl)pyrimidine + 2 H(+) = thiamine phosphate + CO2 + diphosphate</text>
        <dbReference type="Rhea" id="RHEA:47844"/>
        <dbReference type="ChEBI" id="CHEBI:15378"/>
        <dbReference type="ChEBI" id="CHEBI:16526"/>
        <dbReference type="ChEBI" id="CHEBI:33019"/>
        <dbReference type="ChEBI" id="CHEBI:37575"/>
        <dbReference type="ChEBI" id="CHEBI:57841"/>
        <dbReference type="ChEBI" id="CHEBI:62899"/>
        <dbReference type="EC" id="2.5.1.3"/>
    </reaction>
</comment>
<comment type="catalytic activity">
    <reaction evidence="1">
        <text>2-(2-carboxy-4-methylthiazol-5-yl)ethyl phosphate + 4-amino-2-methyl-5-(diphosphooxymethyl)pyrimidine + 2 H(+) = thiamine phosphate + CO2 + diphosphate</text>
        <dbReference type="Rhea" id="RHEA:47848"/>
        <dbReference type="ChEBI" id="CHEBI:15378"/>
        <dbReference type="ChEBI" id="CHEBI:16526"/>
        <dbReference type="ChEBI" id="CHEBI:33019"/>
        <dbReference type="ChEBI" id="CHEBI:37575"/>
        <dbReference type="ChEBI" id="CHEBI:57841"/>
        <dbReference type="ChEBI" id="CHEBI:62890"/>
        <dbReference type="EC" id="2.5.1.3"/>
    </reaction>
</comment>
<comment type="catalytic activity">
    <reaction evidence="1">
        <text>4-methyl-5-(2-phosphooxyethyl)-thiazole + 4-amino-2-methyl-5-(diphosphooxymethyl)pyrimidine + H(+) = thiamine phosphate + diphosphate</text>
        <dbReference type="Rhea" id="RHEA:22328"/>
        <dbReference type="ChEBI" id="CHEBI:15378"/>
        <dbReference type="ChEBI" id="CHEBI:33019"/>
        <dbReference type="ChEBI" id="CHEBI:37575"/>
        <dbReference type="ChEBI" id="CHEBI:57841"/>
        <dbReference type="ChEBI" id="CHEBI:58296"/>
        <dbReference type="EC" id="2.5.1.3"/>
    </reaction>
</comment>
<comment type="cofactor">
    <cofactor evidence="1">
        <name>Mg(2+)</name>
        <dbReference type="ChEBI" id="CHEBI:18420"/>
    </cofactor>
    <text evidence="1">Binds 1 Mg(2+) ion per subunit.</text>
</comment>
<comment type="pathway">
    <text evidence="1">Cofactor biosynthesis; thiamine diphosphate biosynthesis; thiamine phosphate from 4-amino-2-methyl-5-diphosphomethylpyrimidine and 4-methyl-5-(2-phosphoethyl)-thiazole: step 1/1.</text>
</comment>
<comment type="similarity">
    <text evidence="1">Belongs to the thiamine-phosphate synthase family.</text>
</comment>
<gene>
    <name evidence="1" type="primary">thiE</name>
    <name type="ordered locus">Clos_2693</name>
</gene>
<proteinExistence type="inferred from homology"/>
<evidence type="ECO:0000255" key="1">
    <source>
        <dbReference type="HAMAP-Rule" id="MF_00097"/>
    </source>
</evidence>
<accession>A8MK92</accession>
<sequence>MKYNHTVDYGLYLVSDRDVLKGRDFIKSLEEAILGGATIVQLREKEASSLEFYQLALKAKALTEKYNVPLIINDRVDIALAVDADGVHVGQSDLPAHIVRSMIGQNKILGVSTATLEESKKAAEDGADYIGVGALFPTGTKTDANPVTLDQLRYIKENMDIPVVGIGGICEDNIKTIMEVGIDGVAIVSAILGKENIKEAAESLKASIK</sequence>
<organism>
    <name type="scientific">Alkaliphilus oremlandii (strain OhILAs)</name>
    <name type="common">Clostridium oremlandii (strain OhILAs)</name>
    <dbReference type="NCBI Taxonomy" id="350688"/>
    <lineage>
        <taxon>Bacteria</taxon>
        <taxon>Bacillati</taxon>
        <taxon>Bacillota</taxon>
        <taxon>Clostridia</taxon>
        <taxon>Peptostreptococcales</taxon>
        <taxon>Natronincolaceae</taxon>
        <taxon>Alkaliphilus</taxon>
    </lineage>
</organism>
<name>THIE_ALKOO</name>
<dbReference type="EC" id="2.5.1.3" evidence="1"/>
<dbReference type="EMBL" id="CP000853">
    <property type="protein sequence ID" value="ABW20224.1"/>
    <property type="molecule type" value="Genomic_DNA"/>
</dbReference>
<dbReference type="RefSeq" id="WP_012160531.1">
    <property type="nucleotide sequence ID" value="NC_009922.1"/>
</dbReference>
<dbReference type="SMR" id="A8MK92"/>
<dbReference type="STRING" id="350688.Clos_2693"/>
<dbReference type="KEGG" id="aoe:Clos_2693"/>
<dbReference type="eggNOG" id="COG0352">
    <property type="taxonomic scope" value="Bacteria"/>
</dbReference>
<dbReference type="HOGENOM" id="CLU_018272_3_2_9"/>
<dbReference type="OrthoDB" id="9812206at2"/>
<dbReference type="UniPathway" id="UPA00060">
    <property type="reaction ID" value="UER00141"/>
</dbReference>
<dbReference type="Proteomes" id="UP000000269">
    <property type="component" value="Chromosome"/>
</dbReference>
<dbReference type="GO" id="GO:0005737">
    <property type="term" value="C:cytoplasm"/>
    <property type="evidence" value="ECO:0007669"/>
    <property type="project" value="TreeGrafter"/>
</dbReference>
<dbReference type="GO" id="GO:0000287">
    <property type="term" value="F:magnesium ion binding"/>
    <property type="evidence" value="ECO:0007669"/>
    <property type="project" value="UniProtKB-UniRule"/>
</dbReference>
<dbReference type="GO" id="GO:0004789">
    <property type="term" value="F:thiamine-phosphate diphosphorylase activity"/>
    <property type="evidence" value="ECO:0007669"/>
    <property type="project" value="UniProtKB-UniRule"/>
</dbReference>
<dbReference type="GO" id="GO:0009228">
    <property type="term" value="P:thiamine biosynthetic process"/>
    <property type="evidence" value="ECO:0007669"/>
    <property type="project" value="UniProtKB-KW"/>
</dbReference>
<dbReference type="GO" id="GO:0009229">
    <property type="term" value="P:thiamine diphosphate biosynthetic process"/>
    <property type="evidence" value="ECO:0007669"/>
    <property type="project" value="UniProtKB-UniRule"/>
</dbReference>
<dbReference type="CDD" id="cd00564">
    <property type="entry name" value="TMP_TenI"/>
    <property type="match status" value="1"/>
</dbReference>
<dbReference type="FunFam" id="3.20.20.70:FF:000096">
    <property type="entry name" value="Thiamine-phosphate synthase"/>
    <property type="match status" value="1"/>
</dbReference>
<dbReference type="Gene3D" id="3.20.20.70">
    <property type="entry name" value="Aldolase class I"/>
    <property type="match status" value="1"/>
</dbReference>
<dbReference type="HAMAP" id="MF_00097">
    <property type="entry name" value="TMP_synthase"/>
    <property type="match status" value="1"/>
</dbReference>
<dbReference type="InterPro" id="IPR013785">
    <property type="entry name" value="Aldolase_TIM"/>
</dbReference>
<dbReference type="InterPro" id="IPR036206">
    <property type="entry name" value="ThiamineP_synth_sf"/>
</dbReference>
<dbReference type="InterPro" id="IPR022998">
    <property type="entry name" value="ThiamineP_synth_TenI"/>
</dbReference>
<dbReference type="InterPro" id="IPR034291">
    <property type="entry name" value="TMP_synthase"/>
</dbReference>
<dbReference type="NCBIfam" id="TIGR00693">
    <property type="entry name" value="thiE"/>
    <property type="match status" value="1"/>
</dbReference>
<dbReference type="PANTHER" id="PTHR20857:SF23">
    <property type="entry name" value="THIAMINE BIOSYNTHETIC BIFUNCTIONAL ENZYME"/>
    <property type="match status" value="1"/>
</dbReference>
<dbReference type="PANTHER" id="PTHR20857">
    <property type="entry name" value="THIAMINE-PHOSPHATE PYROPHOSPHORYLASE"/>
    <property type="match status" value="1"/>
</dbReference>
<dbReference type="Pfam" id="PF02581">
    <property type="entry name" value="TMP-TENI"/>
    <property type="match status" value="1"/>
</dbReference>
<dbReference type="SUPFAM" id="SSF51391">
    <property type="entry name" value="Thiamin phosphate synthase"/>
    <property type="match status" value="1"/>
</dbReference>
<reference key="1">
    <citation type="submission" date="2007-10" db="EMBL/GenBank/DDBJ databases">
        <title>Complete genome of Alkaliphilus oremlandii OhILAs.</title>
        <authorList>
            <person name="Copeland A."/>
            <person name="Lucas S."/>
            <person name="Lapidus A."/>
            <person name="Barry K."/>
            <person name="Detter J.C."/>
            <person name="Glavina del Rio T."/>
            <person name="Hammon N."/>
            <person name="Israni S."/>
            <person name="Dalin E."/>
            <person name="Tice H."/>
            <person name="Pitluck S."/>
            <person name="Chain P."/>
            <person name="Malfatti S."/>
            <person name="Shin M."/>
            <person name="Vergez L."/>
            <person name="Schmutz J."/>
            <person name="Larimer F."/>
            <person name="Land M."/>
            <person name="Hauser L."/>
            <person name="Kyrpides N."/>
            <person name="Mikhailova N."/>
            <person name="Stolz J.F."/>
            <person name="Dawson A."/>
            <person name="Fisher E."/>
            <person name="Crable B."/>
            <person name="Perera E."/>
            <person name="Lisak J."/>
            <person name="Ranganathan M."/>
            <person name="Basu P."/>
            <person name="Richardson P."/>
        </authorList>
    </citation>
    <scope>NUCLEOTIDE SEQUENCE [LARGE SCALE GENOMIC DNA]</scope>
    <source>
        <strain>OhILAs</strain>
    </source>
</reference>
<feature type="chain" id="PRO_0000336371" description="Thiamine-phosphate synthase">
    <location>
        <begin position="1"/>
        <end position="209"/>
    </location>
</feature>
<feature type="binding site" evidence="1">
    <location>
        <begin position="41"/>
        <end position="45"/>
    </location>
    <ligand>
        <name>4-amino-2-methyl-5-(diphosphooxymethyl)pyrimidine</name>
        <dbReference type="ChEBI" id="CHEBI:57841"/>
    </ligand>
</feature>
<feature type="binding site" evidence="1">
    <location>
        <position position="73"/>
    </location>
    <ligand>
        <name>4-amino-2-methyl-5-(diphosphooxymethyl)pyrimidine</name>
        <dbReference type="ChEBI" id="CHEBI:57841"/>
    </ligand>
</feature>
<feature type="binding site" evidence="1">
    <location>
        <position position="74"/>
    </location>
    <ligand>
        <name>Mg(2+)</name>
        <dbReference type="ChEBI" id="CHEBI:18420"/>
    </ligand>
</feature>
<feature type="binding site" evidence="1">
    <location>
        <position position="93"/>
    </location>
    <ligand>
        <name>Mg(2+)</name>
        <dbReference type="ChEBI" id="CHEBI:18420"/>
    </ligand>
</feature>
<feature type="binding site" evidence="1">
    <location>
        <position position="112"/>
    </location>
    <ligand>
        <name>4-amino-2-methyl-5-(diphosphooxymethyl)pyrimidine</name>
        <dbReference type="ChEBI" id="CHEBI:57841"/>
    </ligand>
</feature>
<feature type="binding site" evidence="1">
    <location>
        <begin position="138"/>
        <end position="140"/>
    </location>
    <ligand>
        <name>2-[(2R,5Z)-2-carboxy-4-methylthiazol-5(2H)-ylidene]ethyl phosphate</name>
        <dbReference type="ChEBI" id="CHEBI:62899"/>
    </ligand>
</feature>
<feature type="binding site" evidence="1">
    <location>
        <position position="141"/>
    </location>
    <ligand>
        <name>4-amino-2-methyl-5-(diphosphooxymethyl)pyrimidine</name>
        <dbReference type="ChEBI" id="CHEBI:57841"/>
    </ligand>
</feature>
<feature type="binding site" evidence="1">
    <location>
        <position position="168"/>
    </location>
    <ligand>
        <name>2-[(2R,5Z)-2-carboxy-4-methylthiazol-5(2H)-ylidene]ethyl phosphate</name>
        <dbReference type="ChEBI" id="CHEBI:62899"/>
    </ligand>
</feature>
<feature type="binding site" evidence="1">
    <location>
        <begin position="188"/>
        <end position="189"/>
    </location>
    <ligand>
        <name>2-[(2R,5Z)-2-carboxy-4-methylthiazol-5(2H)-ylidene]ethyl phosphate</name>
        <dbReference type="ChEBI" id="CHEBI:62899"/>
    </ligand>
</feature>
<keyword id="KW-0460">Magnesium</keyword>
<keyword id="KW-0479">Metal-binding</keyword>
<keyword id="KW-1185">Reference proteome</keyword>
<keyword id="KW-0784">Thiamine biosynthesis</keyword>
<keyword id="KW-0808">Transferase</keyword>
<protein>
    <recommendedName>
        <fullName evidence="1">Thiamine-phosphate synthase</fullName>
        <shortName evidence="1">TP synthase</shortName>
        <shortName evidence="1">TPS</shortName>
        <ecNumber evidence="1">2.5.1.3</ecNumber>
    </recommendedName>
    <alternativeName>
        <fullName evidence="1">Thiamine-phosphate pyrophosphorylase</fullName>
        <shortName evidence="1">TMP pyrophosphorylase</shortName>
        <shortName evidence="1">TMP-PPase</shortName>
    </alternativeName>
</protein>